<feature type="chain" id="PRO_1000019919" description="Probable cytosol aminopeptidase">
    <location>
        <begin position="1"/>
        <end position="490"/>
    </location>
</feature>
<feature type="active site" evidence="1">
    <location>
        <position position="267"/>
    </location>
</feature>
<feature type="active site" evidence="1">
    <location>
        <position position="341"/>
    </location>
</feature>
<feature type="binding site" evidence="1">
    <location>
        <position position="255"/>
    </location>
    <ligand>
        <name>Mn(2+)</name>
        <dbReference type="ChEBI" id="CHEBI:29035"/>
        <label>2</label>
    </ligand>
</feature>
<feature type="binding site" evidence="1">
    <location>
        <position position="260"/>
    </location>
    <ligand>
        <name>Mn(2+)</name>
        <dbReference type="ChEBI" id="CHEBI:29035"/>
        <label>1</label>
    </ligand>
</feature>
<feature type="binding site" evidence="1">
    <location>
        <position position="260"/>
    </location>
    <ligand>
        <name>Mn(2+)</name>
        <dbReference type="ChEBI" id="CHEBI:29035"/>
        <label>2</label>
    </ligand>
</feature>
<feature type="binding site" evidence="1">
    <location>
        <position position="278"/>
    </location>
    <ligand>
        <name>Mn(2+)</name>
        <dbReference type="ChEBI" id="CHEBI:29035"/>
        <label>2</label>
    </ligand>
</feature>
<feature type="binding site" evidence="1">
    <location>
        <position position="337"/>
    </location>
    <ligand>
        <name>Mn(2+)</name>
        <dbReference type="ChEBI" id="CHEBI:29035"/>
        <label>1</label>
    </ligand>
</feature>
<feature type="binding site" evidence="1">
    <location>
        <position position="339"/>
    </location>
    <ligand>
        <name>Mn(2+)</name>
        <dbReference type="ChEBI" id="CHEBI:29035"/>
        <label>1</label>
    </ligand>
</feature>
<feature type="binding site" evidence="1">
    <location>
        <position position="339"/>
    </location>
    <ligand>
        <name>Mn(2+)</name>
        <dbReference type="ChEBI" id="CHEBI:29035"/>
        <label>2</label>
    </ligand>
</feature>
<name>AMPA_GLUOX</name>
<dbReference type="EC" id="3.4.11.1" evidence="1"/>
<dbReference type="EC" id="3.4.11.10" evidence="1"/>
<dbReference type="EMBL" id="CP000009">
    <property type="protein sequence ID" value="AAW60076.1"/>
    <property type="molecule type" value="Genomic_DNA"/>
</dbReference>
<dbReference type="RefSeq" id="WP_011251879.1">
    <property type="nucleotide sequence ID" value="NC_006677.1"/>
</dbReference>
<dbReference type="SMR" id="Q5FU70"/>
<dbReference type="STRING" id="290633.GOX0293"/>
<dbReference type="KEGG" id="gox:GOX0293"/>
<dbReference type="eggNOG" id="COG0260">
    <property type="taxonomic scope" value="Bacteria"/>
</dbReference>
<dbReference type="HOGENOM" id="CLU_013734_2_2_5"/>
<dbReference type="Proteomes" id="UP000006375">
    <property type="component" value="Chromosome"/>
</dbReference>
<dbReference type="GO" id="GO:0005737">
    <property type="term" value="C:cytoplasm"/>
    <property type="evidence" value="ECO:0007669"/>
    <property type="project" value="UniProtKB-SubCell"/>
</dbReference>
<dbReference type="GO" id="GO:0030145">
    <property type="term" value="F:manganese ion binding"/>
    <property type="evidence" value="ECO:0007669"/>
    <property type="project" value="UniProtKB-UniRule"/>
</dbReference>
<dbReference type="GO" id="GO:0070006">
    <property type="term" value="F:metalloaminopeptidase activity"/>
    <property type="evidence" value="ECO:0007669"/>
    <property type="project" value="InterPro"/>
</dbReference>
<dbReference type="GO" id="GO:0006508">
    <property type="term" value="P:proteolysis"/>
    <property type="evidence" value="ECO:0007669"/>
    <property type="project" value="UniProtKB-KW"/>
</dbReference>
<dbReference type="CDD" id="cd00433">
    <property type="entry name" value="Peptidase_M17"/>
    <property type="match status" value="1"/>
</dbReference>
<dbReference type="Gene3D" id="3.40.220.10">
    <property type="entry name" value="Leucine Aminopeptidase, subunit E, domain 1"/>
    <property type="match status" value="1"/>
</dbReference>
<dbReference type="Gene3D" id="3.40.630.10">
    <property type="entry name" value="Zn peptidases"/>
    <property type="match status" value="1"/>
</dbReference>
<dbReference type="HAMAP" id="MF_00181">
    <property type="entry name" value="Cytosol_peptidase_M17"/>
    <property type="match status" value="1"/>
</dbReference>
<dbReference type="InterPro" id="IPR011356">
    <property type="entry name" value="Leucine_aapep/pepB"/>
</dbReference>
<dbReference type="InterPro" id="IPR043472">
    <property type="entry name" value="Macro_dom-like"/>
</dbReference>
<dbReference type="InterPro" id="IPR000819">
    <property type="entry name" value="Peptidase_M17_C"/>
</dbReference>
<dbReference type="InterPro" id="IPR023042">
    <property type="entry name" value="Peptidase_M17_leu_NH2_pept"/>
</dbReference>
<dbReference type="InterPro" id="IPR008283">
    <property type="entry name" value="Peptidase_M17_N"/>
</dbReference>
<dbReference type="NCBIfam" id="NF002073">
    <property type="entry name" value="PRK00913.1-2"/>
    <property type="match status" value="1"/>
</dbReference>
<dbReference type="NCBIfam" id="NF002074">
    <property type="entry name" value="PRK00913.1-4"/>
    <property type="match status" value="1"/>
</dbReference>
<dbReference type="NCBIfam" id="NF002075">
    <property type="entry name" value="PRK00913.2-2"/>
    <property type="match status" value="1"/>
</dbReference>
<dbReference type="NCBIfam" id="NF002077">
    <property type="entry name" value="PRK00913.2-4"/>
    <property type="match status" value="1"/>
</dbReference>
<dbReference type="PANTHER" id="PTHR11963:SF23">
    <property type="entry name" value="CYTOSOL AMINOPEPTIDASE"/>
    <property type="match status" value="1"/>
</dbReference>
<dbReference type="PANTHER" id="PTHR11963">
    <property type="entry name" value="LEUCINE AMINOPEPTIDASE-RELATED"/>
    <property type="match status" value="1"/>
</dbReference>
<dbReference type="Pfam" id="PF00883">
    <property type="entry name" value="Peptidase_M17"/>
    <property type="match status" value="1"/>
</dbReference>
<dbReference type="Pfam" id="PF02789">
    <property type="entry name" value="Peptidase_M17_N"/>
    <property type="match status" value="1"/>
</dbReference>
<dbReference type="PRINTS" id="PR00481">
    <property type="entry name" value="LAMNOPPTDASE"/>
</dbReference>
<dbReference type="SUPFAM" id="SSF52949">
    <property type="entry name" value="Macro domain-like"/>
    <property type="match status" value="1"/>
</dbReference>
<dbReference type="SUPFAM" id="SSF53187">
    <property type="entry name" value="Zn-dependent exopeptidases"/>
    <property type="match status" value="1"/>
</dbReference>
<dbReference type="PROSITE" id="PS00631">
    <property type="entry name" value="CYTOSOL_AP"/>
    <property type="match status" value="1"/>
</dbReference>
<comment type="function">
    <text evidence="1">Presumably involved in the processing and regular turnover of intracellular proteins. Catalyzes the removal of unsubstituted N-terminal amino acids from various peptides.</text>
</comment>
<comment type="catalytic activity">
    <reaction evidence="1">
        <text>Release of an N-terminal amino acid, Xaa-|-Yaa-, in which Xaa is preferably Leu, but may be other amino acids including Pro although not Arg or Lys, and Yaa may be Pro. Amino acid amides and methyl esters are also readily hydrolyzed, but rates on arylamides are exceedingly low.</text>
        <dbReference type="EC" id="3.4.11.1"/>
    </reaction>
</comment>
<comment type="catalytic activity">
    <reaction evidence="1">
        <text>Release of an N-terminal amino acid, preferentially leucine, but not glutamic or aspartic acids.</text>
        <dbReference type="EC" id="3.4.11.10"/>
    </reaction>
</comment>
<comment type="cofactor">
    <cofactor evidence="1">
        <name>Mn(2+)</name>
        <dbReference type="ChEBI" id="CHEBI:29035"/>
    </cofactor>
    <text evidence="1">Binds 2 manganese ions per subunit.</text>
</comment>
<comment type="subcellular location">
    <subcellularLocation>
        <location evidence="1">Cytoplasm</location>
    </subcellularLocation>
</comment>
<comment type="similarity">
    <text evidence="1">Belongs to the peptidase M17 family.</text>
</comment>
<organism>
    <name type="scientific">Gluconobacter oxydans (strain 621H)</name>
    <name type="common">Gluconobacter suboxydans</name>
    <dbReference type="NCBI Taxonomy" id="290633"/>
    <lineage>
        <taxon>Bacteria</taxon>
        <taxon>Pseudomonadati</taxon>
        <taxon>Pseudomonadota</taxon>
        <taxon>Alphaproteobacteria</taxon>
        <taxon>Acetobacterales</taxon>
        <taxon>Acetobacteraceae</taxon>
        <taxon>Gluconobacter</taxon>
    </lineage>
</organism>
<reference key="1">
    <citation type="journal article" date="2005" name="Nat. Biotechnol.">
        <title>Complete genome sequence of the acetic acid bacterium Gluconobacter oxydans.</title>
        <authorList>
            <person name="Prust C."/>
            <person name="Hoffmeister M."/>
            <person name="Liesegang H."/>
            <person name="Wiezer A."/>
            <person name="Fricke W.F."/>
            <person name="Ehrenreich A."/>
            <person name="Gottschalk G."/>
            <person name="Deppenmeier U."/>
        </authorList>
    </citation>
    <scope>NUCLEOTIDE SEQUENCE [LARGE SCALE GENOMIC DNA]</scope>
    <source>
        <strain>621H</strain>
    </source>
</reference>
<proteinExistence type="inferred from homology"/>
<protein>
    <recommendedName>
        <fullName evidence="1">Probable cytosol aminopeptidase</fullName>
        <ecNumber evidence="1">3.4.11.1</ecNumber>
    </recommendedName>
    <alternativeName>
        <fullName evidence="1">Leucine aminopeptidase</fullName>
        <shortName evidence="1">LAP</shortName>
        <ecNumber evidence="1">3.4.11.10</ecNumber>
    </alternativeName>
    <alternativeName>
        <fullName evidence="1">Leucyl aminopeptidase</fullName>
    </alternativeName>
</protein>
<gene>
    <name evidence="1" type="primary">pepA</name>
    <name type="ordered locus">GOX0293</name>
</gene>
<keyword id="KW-0031">Aminopeptidase</keyword>
<keyword id="KW-0963">Cytoplasm</keyword>
<keyword id="KW-0378">Hydrolase</keyword>
<keyword id="KW-0464">Manganese</keyword>
<keyword id="KW-0479">Metal-binding</keyword>
<keyword id="KW-0645">Protease</keyword>
<keyword id="KW-1185">Reference proteome</keyword>
<accession>Q5FU70</accession>
<evidence type="ECO:0000255" key="1">
    <source>
        <dbReference type="HAMAP-Rule" id="MF_00181"/>
    </source>
</evidence>
<sequence length="490" mass="50802">MLSVIFDSFPAFSADAPRAVVLLCDAASGETFAALDKASAGAVSRAVALKGFKGEAGQSVVLPAPAEGLSQVVLAGVKPKGGAAVDAVAIENAAGRAVRLLEGVESAVLALSEGLEQFAPDAALGARLASYDFDVYRTKKSESRPVLKTLHVAVSDVAAAQTRWAALDAVSQGVILTRNLVSEPPNVLYPQTFTQRIEELRELGLTVEVLDEKAMTELGFGALLGVAQGSVHKPRTVIVRHNGGGSEAPLAFIGKGVTFDSGGISIKPAAGMDEMKTDMGGAATVIGLMSALARRKALVNAIGVVGLVENMVSGGAQRPGDIVRAYDGQTIEVLNTDAEGRLVLADVLSYTRKRFSPKLMVNLATLTGAIVVSLGYENAGLFSNSDALAKGLSEAGAQVGEGLWRMPMGEAYNRELNSDIADMKNIGGRPGSAILAAEFLKRFVGDTDWAHLDIAGTAWKTKASAIAPKGATGFGVRLLDCFVKAHEASA</sequence>